<feature type="chain" id="PRO_0000428217" description="Large ribosomal subunit protein bL27">
    <location>
        <begin position="1"/>
        <end position="86"/>
    </location>
</feature>
<feature type="region of interest" description="Disordered" evidence="1">
    <location>
        <begin position="1"/>
        <end position="21"/>
    </location>
</feature>
<evidence type="ECO:0000256" key="1">
    <source>
        <dbReference type="SAM" id="MobiDB-lite"/>
    </source>
</evidence>
<evidence type="ECO:0000305" key="2"/>
<gene>
    <name type="primary">rpmA</name>
    <name type="ordered locus">MT2517</name>
</gene>
<comment type="similarity">
    <text evidence="2">Belongs to the bacterial ribosomal protein bL27 family.</text>
</comment>
<accession>P9WHB2</accession>
<accession>L0TB83</accession>
<accession>P66127</accession>
<accession>P71908</accession>
<sequence>MAHKKGASSSRNGRDSAAQRLGVKRYGGQVVKAGEILVRQRGTKFHPGVNVGRGGDDTLFAKTAGAVEFGIKRGRKTVSIVGSTTA</sequence>
<protein>
    <recommendedName>
        <fullName evidence="2">Large ribosomal subunit protein bL27</fullName>
    </recommendedName>
    <alternativeName>
        <fullName>50S ribosomal protein L27</fullName>
    </alternativeName>
</protein>
<keyword id="KW-1185">Reference proteome</keyword>
<keyword id="KW-0687">Ribonucleoprotein</keyword>
<keyword id="KW-0689">Ribosomal protein</keyword>
<dbReference type="EMBL" id="AE000516">
    <property type="protein sequence ID" value="AAK46814.1"/>
    <property type="molecule type" value="Genomic_DNA"/>
</dbReference>
<dbReference type="PIR" id="G70680">
    <property type="entry name" value="G70680"/>
</dbReference>
<dbReference type="RefSeq" id="WP_003412574.1">
    <property type="nucleotide sequence ID" value="NZ_KK341227.1"/>
</dbReference>
<dbReference type="SMR" id="P9WHB2"/>
<dbReference type="GeneID" id="45426431"/>
<dbReference type="KEGG" id="mtc:MT2517"/>
<dbReference type="PATRIC" id="fig|83331.31.peg.2716"/>
<dbReference type="HOGENOM" id="CLU_095424_4_0_11"/>
<dbReference type="Proteomes" id="UP000001020">
    <property type="component" value="Chromosome"/>
</dbReference>
<dbReference type="GO" id="GO:0022625">
    <property type="term" value="C:cytosolic large ribosomal subunit"/>
    <property type="evidence" value="ECO:0007669"/>
    <property type="project" value="TreeGrafter"/>
</dbReference>
<dbReference type="GO" id="GO:0003735">
    <property type="term" value="F:structural constituent of ribosome"/>
    <property type="evidence" value="ECO:0007669"/>
    <property type="project" value="InterPro"/>
</dbReference>
<dbReference type="GO" id="GO:0006412">
    <property type="term" value="P:translation"/>
    <property type="evidence" value="ECO:0007669"/>
    <property type="project" value="UniProtKB-UniRule"/>
</dbReference>
<dbReference type="FunFam" id="2.40.50.100:FF:000020">
    <property type="entry name" value="50S ribosomal protein L27"/>
    <property type="match status" value="1"/>
</dbReference>
<dbReference type="Gene3D" id="2.40.50.100">
    <property type="match status" value="1"/>
</dbReference>
<dbReference type="HAMAP" id="MF_00539">
    <property type="entry name" value="Ribosomal_bL27"/>
    <property type="match status" value="1"/>
</dbReference>
<dbReference type="InterPro" id="IPR001684">
    <property type="entry name" value="Ribosomal_bL27"/>
</dbReference>
<dbReference type="InterPro" id="IPR018261">
    <property type="entry name" value="Ribosomal_bL27_CS"/>
</dbReference>
<dbReference type="NCBIfam" id="TIGR00062">
    <property type="entry name" value="L27"/>
    <property type="match status" value="1"/>
</dbReference>
<dbReference type="PANTHER" id="PTHR15893:SF0">
    <property type="entry name" value="LARGE RIBOSOMAL SUBUNIT PROTEIN BL27M"/>
    <property type="match status" value="1"/>
</dbReference>
<dbReference type="PANTHER" id="PTHR15893">
    <property type="entry name" value="RIBOSOMAL PROTEIN L27"/>
    <property type="match status" value="1"/>
</dbReference>
<dbReference type="Pfam" id="PF01016">
    <property type="entry name" value="Ribosomal_L27"/>
    <property type="match status" value="1"/>
</dbReference>
<dbReference type="PRINTS" id="PR00063">
    <property type="entry name" value="RIBOSOMALL27"/>
</dbReference>
<dbReference type="SUPFAM" id="SSF110324">
    <property type="entry name" value="Ribosomal L27 protein-like"/>
    <property type="match status" value="1"/>
</dbReference>
<dbReference type="PROSITE" id="PS00831">
    <property type="entry name" value="RIBOSOMAL_L27"/>
    <property type="match status" value="1"/>
</dbReference>
<organism>
    <name type="scientific">Mycobacterium tuberculosis (strain CDC 1551 / Oshkosh)</name>
    <dbReference type="NCBI Taxonomy" id="83331"/>
    <lineage>
        <taxon>Bacteria</taxon>
        <taxon>Bacillati</taxon>
        <taxon>Actinomycetota</taxon>
        <taxon>Actinomycetes</taxon>
        <taxon>Mycobacteriales</taxon>
        <taxon>Mycobacteriaceae</taxon>
        <taxon>Mycobacterium</taxon>
        <taxon>Mycobacterium tuberculosis complex</taxon>
    </lineage>
</organism>
<reference key="1">
    <citation type="journal article" date="2002" name="J. Bacteriol.">
        <title>Whole-genome comparison of Mycobacterium tuberculosis clinical and laboratory strains.</title>
        <authorList>
            <person name="Fleischmann R.D."/>
            <person name="Alland D."/>
            <person name="Eisen J.A."/>
            <person name="Carpenter L."/>
            <person name="White O."/>
            <person name="Peterson J.D."/>
            <person name="DeBoy R.T."/>
            <person name="Dodson R.J."/>
            <person name="Gwinn M.L."/>
            <person name="Haft D.H."/>
            <person name="Hickey E.K."/>
            <person name="Kolonay J.F."/>
            <person name="Nelson W.C."/>
            <person name="Umayam L.A."/>
            <person name="Ermolaeva M.D."/>
            <person name="Salzberg S.L."/>
            <person name="Delcher A."/>
            <person name="Utterback T.R."/>
            <person name="Weidman J.F."/>
            <person name="Khouri H.M."/>
            <person name="Gill J."/>
            <person name="Mikula A."/>
            <person name="Bishai W."/>
            <person name="Jacobs W.R. Jr."/>
            <person name="Venter J.C."/>
            <person name="Fraser C.M."/>
        </authorList>
    </citation>
    <scope>NUCLEOTIDE SEQUENCE [LARGE SCALE GENOMIC DNA]</scope>
    <source>
        <strain>CDC 1551 / Oshkosh</strain>
    </source>
</reference>
<name>RL27_MYCTO</name>
<proteinExistence type="inferred from homology"/>